<name>UBE2T_BOVIN</name>
<evidence type="ECO:0000250" key="1">
    <source>
        <dbReference type="UniProtKB" id="Q9NPD8"/>
    </source>
</evidence>
<evidence type="ECO:0000255" key="2">
    <source>
        <dbReference type="PROSITE-ProRule" id="PRU00388"/>
    </source>
</evidence>
<evidence type="ECO:0000255" key="3">
    <source>
        <dbReference type="PROSITE-ProRule" id="PRU10133"/>
    </source>
</evidence>
<evidence type="ECO:0000256" key="4">
    <source>
        <dbReference type="SAM" id="MobiDB-lite"/>
    </source>
</evidence>
<evidence type="ECO:0000305" key="5"/>
<comment type="function">
    <text evidence="1">Accepts ubiquitin from the E1 complex and catalyzes its covalent attachment to other proteins. Catalyzes monoubiquitination. Involved in mitomycin-C (MMC)-induced DNA repair: acts as a specific E2 ubiquitin-conjugating enzyme for the Fanconi anemia complex by associating with E3 ubiquitin-protein ligase FANCL and catalyzing monoubiquitination of FANCD2, a key step in the DNA damage pathway. Also mediates monoubiquitination of FANCL and FANCI. May contribute to ubiquitination and degradation of BRCA1. In vitro able to promote polyubiquitination using all 7 ubiquitin Lys residues, but may prefer 'Lys-11'-, 'Lys-27'-, 'Lys-48'- and 'Lys-63'-linked polyubiquitination.</text>
</comment>
<comment type="catalytic activity">
    <reaction evidence="2 3">
        <text>S-ubiquitinyl-[E1 ubiquitin-activating enzyme]-L-cysteine + [E2 ubiquitin-conjugating enzyme]-L-cysteine = [E1 ubiquitin-activating enzyme]-L-cysteine + S-ubiquitinyl-[E2 ubiquitin-conjugating enzyme]-L-cysteine.</text>
        <dbReference type="EC" id="2.3.2.23"/>
    </reaction>
</comment>
<comment type="pathway">
    <text evidence="2">Protein modification; protein ubiquitination.</text>
</comment>
<comment type="subunit">
    <text evidence="1">Interacts with FANCL and BRCA1.</text>
</comment>
<comment type="subcellular location">
    <subcellularLocation>
        <location evidence="1">Nucleus</location>
    </subcellularLocation>
    <text evidence="1">Accumulates to chromatin.</text>
</comment>
<comment type="PTM">
    <text evidence="1">Auto-ubiquitinated. Effects of auto-monoubiquitination at Lys-91 and Lys-180 are unclear.</text>
</comment>
<comment type="similarity">
    <text evidence="2">Belongs to the ubiquitin-conjugating enzyme family.</text>
</comment>
<organism>
    <name type="scientific">Bos taurus</name>
    <name type="common">Bovine</name>
    <dbReference type="NCBI Taxonomy" id="9913"/>
    <lineage>
        <taxon>Eukaryota</taxon>
        <taxon>Metazoa</taxon>
        <taxon>Chordata</taxon>
        <taxon>Craniata</taxon>
        <taxon>Vertebrata</taxon>
        <taxon>Euteleostomi</taxon>
        <taxon>Mammalia</taxon>
        <taxon>Eutheria</taxon>
        <taxon>Laurasiatheria</taxon>
        <taxon>Artiodactyla</taxon>
        <taxon>Ruminantia</taxon>
        <taxon>Pecora</taxon>
        <taxon>Bovidae</taxon>
        <taxon>Bovinae</taxon>
        <taxon>Bos</taxon>
    </lineage>
</organism>
<proteinExistence type="evidence at transcript level"/>
<protein>
    <recommendedName>
        <fullName>Ubiquitin-conjugating enzyme E2 T</fullName>
        <ecNumber>2.3.2.23</ecNumber>
    </recommendedName>
    <alternativeName>
        <fullName>E2 ubiquitin-conjugating enzyme T</fullName>
    </alternativeName>
    <alternativeName>
        <fullName>Ubiquitin carrier protein T</fullName>
    </alternativeName>
    <alternativeName>
        <fullName>Ubiquitin-protein ligase T</fullName>
    </alternativeName>
</protein>
<reference key="1">
    <citation type="journal article" date="2009" name="Genome Biol.">
        <title>A whole-genome assembly of the domestic cow, Bos taurus.</title>
        <authorList>
            <person name="Zimin A.V."/>
            <person name="Delcher A.L."/>
            <person name="Florea L."/>
            <person name="Kelley D.R."/>
            <person name="Schatz M.C."/>
            <person name="Puiu D."/>
            <person name="Hanrahan F."/>
            <person name="Pertea G."/>
            <person name="Van Tassell C.P."/>
            <person name="Sonstegard T.S."/>
            <person name="Marcais G."/>
            <person name="Roberts M."/>
            <person name="Subramanian P."/>
            <person name="Yorke J.A."/>
            <person name="Salzberg S.L."/>
        </authorList>
    </citation>
    <scope>NUCLEOTIDE SEQUENCE [LARGE SCALE GENOMIC DNA]</scope>
    <source>
        <strain>Hereford</strain>
    </source>
</reference>
<reference key="2">
    <citation type="submission" date="2005-11" db="EMBL/GenBank/DDBJ databases">
        <authorList>
            <consortium name="NIH - Mammalian Gene Collection (MGC) project"/>
        </authorList>
    </citation>
    <scope>NUCLEOTIDE SEQUENCE [LARGE SCALE MRNA]</scope>
    <source>
        <strain>Crossbred X Angus</strain>
        <tissue>Liver</tissue>
    </source>
</reference>
<gene>
    <name type="primary">UBE2T</name>
</gene>
<keyword id="KW-0067">ATP-binding</keyword>
<keyword id="KW-0227">DNA damage</keyword>
<keyword id="KW-0234">DNA repair</keyword>
<keyword id="KW-1017">Isopeptide bond</keyword>
<keyword id="KW-0547">Nucleotide-binding</keyword>
<keyword id="KW-0539">Nucleus</keyword>
<keyword id="KW-1185">Reference proteome</keyword>
<keyword id="KW-0808">Transferase</keyword>
<keyword id="KW-0832">Ubl conjugation</keyword>
<keyword id="KW-0833">Ubl conjugation pathway</keyword>
<sequence>MQRTSRLKRELSLLAAEPPPGITCWQDGDRMEDLRAQILGGANTPYEKGVFKLEVHIPERYPFEPPQIRFLTPIYHPNIDSAGRICLDVLKLPPKGAWRPSLNIATLLTSIQQLMAEPNPDDPLMADISSEFKYNKPVFFKNARQWTEKHARQKTDEEGMPGSLPEVGGSEGPSAAQKRKAGQLSSGGKRFCPDV</sequence>
<dbReference type="EC" id="2.3.2.23"/>
<dbReference type="EMBL" id="DAAA02043707">
    <property type="status" value="NOT_ANNOTATED_CDS"/>
    <property type="molecule type" value="Genomic_DNA"/>
</dbReference>
<dbReference type="EMBL" id="BC109637">
    <property type="protein sequence ID" value="AAI09638.1"/>
    <property type="molecule type" value="mRNA"/>
</dbReference>
<dbReference type="RefSeq" id="NP_001033123.1">
    <property type="nucleotide sequence ID" value="NM_001038034.2"/>
</dbReference>
<dbReference type="SMR" id="Q32LD2"/>
<dbReference type="FunCoup" id="Q32LD2">
    <property type="interactions" value="412"/>
</dbReference>
<dbReference type="STRING" id="9913.ENSBTAP00000071820"/>
<dbReference type="PaxDb" id="9913-ENSBTAP00000006290"/>
<dbReference type="GeneID" id="505314"/>
<dbReference type="KEGG" id="bta:505314"/>
<dbReference type="CTD" id="29089"/>
<dbReference type="eggNOG" id="KOG0417">
    <property type="taxonomic scope" value="Eukaryota"/>
</dbReference>
<dbReference type="HOGENOM" id="CLU_030988_13_2_1"/>
<dbReference type="InParanoid" id="Q32LD2"/>
<dbReference type="OrthoDB" id="9978460at2759"/>
<dbReference type="TreeFam" id="TF354203"/>
<dbReference type="UniPathway" id="UPA00143"/>
<dbReference type="Proteomes" id="UP000009136">
    <property type="component" value="Unplaced"/>
</dbReference>
<dbReference type="GO" id="GO:0005634">
    <property type="term" value="C:nucleus"/>
    <property type="evidence" value="ECO:0000318"/>
    <property type="project" value="GO_Central"/>
</dbReference>
<dbReference type="GO" id="GO:0005524">
    <property type="term" value="F:ATP binding"/>
    <property type="evidence" value="ECO:0007669"/>
    <property type="project" value="UniProtKB-KW"/>
</dbReference>
<dbReference type="GO" id="GO:0003682">
    <property type="term" value="F:chromatin binding"/>
    <property type="evidence" value="ECO:0000250"/>
    <property type="project" value="UniProtKB"/>
</dbReference>
<dbReference type="GO" id="GO:0061631">
    <property type="term" value="F:ubiquitin conjugating enzyme activity"/>
    <property type="evidence" value="ECO:0000318"/>
    <property type="project" value="GO_Central"/>
</dbReference>
<dbReference type="GO" id="GO:0004842">
    <property type="term" value="F:ubiquitin-protein transferase activity"/>
    <property type="evidence" value="ECO:0000250"/>
    <property type="project" value="UniProtKB"/>
</dbReference>
<dbReference type="GO" id="GO:0006974">
    <property type="term" value="P:DNA damage response"/>
    <property type="evidence" value="ECO:0000250"/>
    <property type="project" value="UniProtKB"/>
</dbReference>
<dbReference type="GO" id="GO:0006281">
    <property type="term" value="P:DNA repair"/>
    <property type="evidence" value="ECO:0000250"/>
    <property type="project" value="UniProtKB"/>
</dbReference>
<dbReference type="GO" id="GO:0051865">
    <property type="term" value="P:protein autoubiquitination"/>
    <property type="evidence" value="ECO:0000250"/>
    <property type="project" value="UniProtKB"/>
</dbReference>
<dbReference type="GO" id="GO:0070979">
    <property type="term" value="P:protein K11-linked ubiquitination"/>
    <property type="evidence" value="ECO:0000250"/>
    <property type="project" value="UniProtKB"/>
</dbReference>
<dbReference type="GO" id="GO:0044314">
    <property type="term" value="P:protein K27-linked ubiquitination"/>
    <property type="evidence" value="ECO:0000250"/>
    <property type="project" value="UniProtKB"/>
</dbReference>
<dbReference type="GO" id="GO:0035519">
    <property type="term" value="P:protein K29-linked ubiquitination"/>
    <property type="evidence" value="ECO:0000250"/>
    <property type="project" value="UniProtKB"/>
</dbReference>
<dbReference type="GO" id="GO:0070936">
    <property type="term" value="P:protein K48-linked ubiquitination"/>
    <property type="evidence" value="ECO:0000250"/>
    <property type="project" value="UniProtKB"/>
</dbReference>
<dbReference type="GO" id="GO:0085020">
    <property type="term" value="P:protein K6-linked ubiquitination"/>
    <property type="evidence" value="ECO:0000250"/>
    <property type="project" value="UniProtKB"/>
</dbReference>
<dbReference type="GO" id="GO:0070534">
    <property type="term" value="P:protein K63-linked ubiquitination"/>
    <property type="evidence" value="ECO:0000250"/>
    <property type="project" value="UniProtKB"/>
</dbReference>
<dbReference type="GO" id="GO:0006513">
    <property type="term" value="P:protein monoubiquitination"/>
    <property type="evidence" value="ECO:0000250"/>
    <property type="project" value="UniProtKB"/>
</dbReference>
<dbReference type="GO" id="GO:0000209">
    <property type="term" value="P:protein polyubiquitination"/>
    <property type="evidence" value="ECO:0000318"/>
    <property type="project" value="GO_Central"/>
</dbReference>
<dbReference type="CDD" id="cd23805">
    <property type="entry name" value="UBCc_UBE2T"/>
    <property type="match status" value="1"/>
</dbReference>
<dbReference type="FunFam" id="3.10.110.10:FF:000041">
    <property type="entry name" value="Ubiquitin-conjugating enzyme E2 T"/>
    <property type="match status" value="1"/>
</dbReference>
<dbReference type="Gene3D" id="3.10.110.10">
    <property type="entry name" value="Ubiquitin Conjugating Enzyme"/>
    <property type="match status" value="1"/>
</dbReference>
<dbReference type="InterPro" id="IPR000608">
    <property type="entry name" value="UBQ-conjugat_E2_core"/>
</dbReference>
<dbReference type="InterPro" id="IPR023313">
    <property type="entry name" value="UBQ-conjugating_AS"/>
</dbReference>
<dbReference type="InterPro" id="IPR016135">
    <property type="entry name" value="UBQ-conjugating_enzyme/RWD"/>
</dbReference>
<dbReference type="PANTHER" id="PTHR24068">
    <property type="entry name" value="UBIQUITIN-CONJUGATING ENZYME E2"/>
    <property type="match status" value="1"/>
</dbReference>
<dbReference type="Pfam" id="PF00179">
    <property type="entry name" value="UQ_con"/>
    <property type="match status" value="1"/>
</dbReference>
<dbReference type="SMART" id="SM00212">
    <property type="entry name" value="UBCc"/>
    <property type="match status" value="1"/>
</dbReference>
<dbReference type="SUPFAM" id="SSF54495">
    <property type="entry name" value="UBC-like"/>
    <property type="match status" value="1"/>
</dbReference>
<dbReference type="PROSITE" id="PS00183">
    <property type="entry name" value="UBC_1"/>
    <property type="match status" value="1"/>
</dbReference>
<dbReference type="PROSITE" id="PS50127">
    <property type="entry name" value="UBC_2"/>
    <property type="match status" value="1"/>
</dbReference>
<feature type="chain" id="PRO_0000281863" description="Ubiquitin-conjugating enzyme E2 T">
    <location>
        <begin position="1"/>
        <end position="195"/>
    </location>
</feature>
<feature type="domain" description="UBC core" evidence="2">
    <location>
        <begin position="2"/>
        <end position="152"/>
    </location>
</feature>
<feature type="region of interest" description="Disordered" evidence="4">
    <location>
        <begin position="146"/>
        <end position="195"/>
    </location>
</feature>
<feature type="compositionally biased region" description="Basic and acidic residues" evidence="4">
    <location>
        <begin position="146"/>
        <end position="157"/>
    </location>
</feature>
<feature type="active site" description="Glycyl thioester intermediate" evidence="2 3">
    <location>
        <position position="86"/>
    </location>
</feature>
<feature type="cross-link" description="Glycyl lysine isopeptide (Lys-Gly) (interchain with G-Cter in ubiquitin)" evidence="1">
    <location>
        <position position="91"/>
    </location>
</feature>
<feature type="cross-link" description="Glycyl lysine isopeptide (Lys-Gly) (interchain with G-Cter in ubiquitin)" evidence="1">
    <location>
        <position position="180"/>
    </location>
</feature>
<feature type="cross-link" description="Glycyl lysine isopeptide (Lys-Gly) (interchain with G-Cter in SUMO2)" evidence="1">
    <location>
        <position position="189"/>
    </location>
</feature>
<feature type="sequence conflict" description="In Ref. 2; AAI09638." evidence="5" ref="2">
    <original>S</original>
    <variation>C</variation>
    <location>
        <position position="110"/>
    </location>
</feature>
<accession>Q32LD2</accession>
<accession>G3X6G9</accession>